<gene>
    <name evidence="1" type="primary">atpD</name>
    <name type="ordered locus">Athe_1424</name>
</gene>
<feature type="chain" id="PRO_1000166566" description="ATP synthase subunit beta">
    <location>
        <begin position="1"/>
        <end position="467"/>
    </location>
</feature>
<feature type="binding site" evidence="1">
    <location>
        <begin position="152"/>
        <end position="159"/>
    </location>
    <ligand>
        <name>ATP</name>
        <dbReference type="ChEBI" id="CHEBI:30616"/>
    </ligand>
</feature>
<reference key="1">
    <citation type="submission" date="2009-01" db="EMBL/GenBank/DDBJ databases">
        <title>Complete sequence of chromosome of Caldicellulosiruptor becscii DSM 6725.</title>
        <authorList>
            <person name="Lucas S."/>
            <person name="Copeland A."/>
            <person name="Lapidus A."/>
            <person name="Glavina del Rio T."/>
            <person name="Tice H."/>
            <person name="Bruce D."/>
            <person name="Goodwin L."/>
            <person name="Pitluck S."/>
            <person name="Sims D."/>
            <person name="Meincke L."/>
            <person name="Brettin T."/>
            <person name="Detter J.C."/>
            <person name="Han C."/>
            <person name="Larimer F."/>
            <person name="Land M."/>
            <person name="Hauser L."/>
            <person name="Kyrpides N."/>
            <person name="Ovchinnikova G."/>
            <person name="Kataeva I."/>
            <person name="Adams M.W.W."/>
        </authorList>
    </citation>
    <scope>NUCLEOTIDE SEQUENCE [LARGE SCALE GENOMIC DNA]</scope>
    <source>
        <strain>ATCC BAA-1888 / DSM 6725 / KCTC 15123 / Z-1320</strain>
    </source>
</reference>
<sequence length="467" mass="51523">MEQNVGYVVQIIGPVIDIRFESENLPAINNAIEIHFDGKKLVAEVAQHLGNDTVRCVALGSTDGLRRGVKAIDTGGPIKVPVGRGTLGRIFNVLGEPIDNKGEVVASDYWPIHRSAPSFEEQVPAVEIFETGIKVIDLLAPYAKGGKIGLFGGAGVGKTVLIMELIRNIATEHGGFSIFTGVGERTREGNDLWLDMNESGVIEKTVLVFGQMNEPPGARMRVALTGLTMAEYFRDVEGQDVLLFIDNIFRFIQAGSEVSALLGRIPSAVGYQPTLANEVGALQERITSTKKGSITSVQAIYVPADDLTDPAPATTFAHLDATTVLSRQIAELGIYPAVDPLDSTSRILDPRIVGEEHYYVARTVQQILQRYKELQDIIAILGMDELSEEDKLIVYRARKIQRFLSQPFFVAEAFTGRPGRYVKLKDTIRGFKEIIEGKMDHIPEQYFYMVGTIDEVYENYEKDMKGK</sequence>
<accession>B9MS68</accession>
<protein>
    <recommendedName>
        <fullName evidence="1">ATP synthase subunit beta</fullName>
        <ecNumber evidence="1">7.1.2.2</ecNumber>
    </recommendedName>
    <alternativeName>
        <fullName evidence="1">ATP synthase F1 sector subunit beta</fullName>
    </alternativeName>
    <alternativeName>
        <fullName evidence="1">F-ATPase subunit beta</fullName>
    </alternativeName>
</protein>
<dbReference type="EC" id="7.1.2.2" evidence="1"/>
<dbReference type="EMBL" id="CP001393">
    <property type="protein sequence ID" value="ACM60522.1"/>
    <property type="molecule type" value="Genomic_DNA"/>
</dbReference>
<dbReference type="RefSeq" id="WP_015907887.1">
    <property type="nucleotide sequence ID" value="NC_012034.1"/>
</dbReference>
<dbReference type="SMR" id="B9MS68"/>
<dbReference type="STRING" id="521460.Athe_1424"/>
<dbReference type="GeneID" id="31772769"/>
<dbReference type="KEGG" id="ate:Athe_1424"/>
<dbReference type="eggNOG" id="COG0055">
    <property type="taxonomic scope" value="Bacteria"/>
</dbReference>
<dbReference type="HOGENOM" id="CLU_022398_0_2_9"/>
<dbReference type="Proteomes" id="UP000007723">
    <property type="component" value="Chromosome"/>
</dbReference>
<dbReference type="GO" id="GO:0005886">
    <property type="term" value="C:plasma membrane"/>
    <property type="evidence" value="ECO:0007669"/>
    <property type="project" value="UniProtKB-SubCell"/>
</dbReference>
<dbReference type="GO" id="GO:0045259">
    <property type="term" value="C:proton-transporting ATP synthase complex"/>
    <property type="evidence" value="ECO:0007669"/>
    <property type="project" value="UniProtKB-KW"/>
</dbReference>
<dbReference type="GO" id="GO:0005524">
    <property type="term" value="F:ATP binding"/>
    <property type="evidence" value="ECO:0007669"/>
    <property type="project" value="UniProtKB-UniRule"/>
</dbReference>
<dbReference type="GO" id="GO:0016887">
    <property type="term" value="F:ATP hydrolysis activity"/>
    <property type="evidence" value="ECO:0007669"/>
    <property type="project" value="InterPro"/>
</dbReference>
<dbReference type="GO" id="GO:0046933">
    <property type="term" value="F:proton-transporting ATP synthase activity, rotational mechanism"/>
    <property type="evidence" value="ECO:0007669"/>
    <property type="project" value="UniProtKB-UniRule"/>
</dbReference>
<dbReference type="CDD" id="cd18110">
    <property type="entry name" value="ATP-synt_F1_beta_C"/>
    <property type="match status" value="1"/>
</dbReference>
<dbReference type="CDD" id="cd18115">
    <property type="entry name" value="ATP-synt_F1_beta_N"/>
    <property type="match status" value="1"/>
</dbReference>
<dbReference type="CDD" id="cd01133">
    <property type="entry name" value="F1-ATPase_beta_CD"/>
    <property type="match status" value="1"/>
</dbReference>
<dbReference type="FunFam" id="1.10.1140.10:FF:000001">
    <property type="entry name" value="ATP synthase subunit beta"/>
    <property type="match status" value="1"/>
</dbReference>
<dbReference type="FunFam" id="3.40.50.300:FF:000026">
    <property type="entry name" value="ATP synthase subunit beta"/>
    <property type="match status" value="1"/>
</dbReference>
<dbReference type="Gene3D" id="2.40.10.170">
    <property type="match status" value="1"/>
</dbReference>
<dbReference type="Gene3D" id="1.10.1140.10">
    <property type="entry name" value="Bovine Mitochondrial F1-atpase, Atp Synthase Beta Chain, Chain D, domain 3"/>
    <property type="match status" value="1"/>
</dbReference>
<dbReference type="Gene3D" id="3.40.50.300">
    <property type="entry name" value="P-loop containing nucleotide triphosphate hydrolases"/>
    <property type="match status" value="1"/>
</dbReference>
<dbReference type="HAMAP" id="MF_01347">
    <property type="entry name" value="ATP_synth_beta_bact"/>
    <property type="match status" value="1"/>
</dbReference>
<dbReference type="InterPro" id="IPR003593">
    <property type="entry name" value="AAA+_ATPase"/>
</dbReference>
<dbReference type="InterPro" id="IPR055190">
    <property type="entry name" value="ATP-synt_VA_C"/>
</dbReference>
<dbReference type="InterPro" id="IPR005722">
    <property type="entry name" value="ATP_synth_F1_bsu"/>
</dbReference>
<dbReference type="InterPro" id="IPR020003">
    <property type="entry name" value="ATPase_a/bsu_AS"/>
</dbReference>
<dbReference type="InterPro" id="IPR050053">
    <property type="entry name" value="ATPase_alpha/beta_chains"/>
</dbReference>
<dbReference type="InterPro" id="IPR004100">
    <property type="entry name" value="ATPase_F1/V1/A1_a/bsu_N"/>
</dbReference>
<dbReference type="InterPro" id="IPR036121">
    <property type="entry name" value="ATPase_F1/V1/A1_a/bsu_N_sf"/>
</dbReference>
<dbReference type="InterPro" id="IPR000194">
    <property type="entry name" value="ATPase_F1/V1/A1_a/bsu_nucl-bd"/>
</dbReference>
<dbReference type="InterPro" id="IPR024034">
    <property type="entry name" value="ATPase_F1/V1_b/a_C"/>
</dbReference>
<dbReference type="InterPro" id="IPR027417">
    <property type="entry name" value="P-loop_NTPase"/>
</dbReference>
<dbReference type="NCBIfam" id="TIGR01039">
    <property type="entry name" value="atpD"/>
    <property type="match status" value="1"/>
</dbReference>
<dbReference type="PANTHER" id="PTHR15184">
    <property type="entry name" value="ATP SYNTHASE"/>
    <property type="match status" value="1"/>
</dbReference>
<dbReference type="PANTHER" id="PTHR15184:SF71">
    <property type="entry name" value="ATP SYNTHASE SUBUNIT BETA, MITOCHONDRIAL"/>
    <property type="match status" value="1"/>
</dbReference>
<dbReference type="Pfam" id="PF00006">
    <property type="entry name" value="ATP-synt_ab"/>
    <property type="match status" value="1"/>
</dbReference>
<dbReference type="Pfam" id="PF02874">
    <property type="entry name" value="ATP-synt_ab_N"/>
    <property type="match status" value="1"/>
</dbReference>
<dbReference type="Pfam" id="PF22919">
    <property type="entry name" value="ATP-synt_VA_C"/>
    <property type="match status" value="1"/>
</dbReference>
<dbReference type="PIRSF" id="PIRSF039072">
    <property type="entry name" value="ATPase_subunit_beta"/>
    <property type="match status" value="1"/>
</dbReference>
<dbReference type="SMART" id="SM00382">
    <property type="entry name" value="AAA"/>
    <property type="match status" value="1"/>
</dbReference>
<dbReference type="SUPFAM" id="SSF47917">
    <property type="entry name" value="C-terminal domain of alpha and beta subunits of F1 ATP synthase"/>
    <property type="match status" value="1"/>
</dbReference>
<dbReference type="SUPFAM" id="SSF50615">
    <property type="entry name" value="N-terminal domain of alpha and beta subunits of F1 ATP synthase"/>
    <property type="match status" value="1"/>
</dbReference>
<dbReference type="SUPFAM" id="SSF52540">
    <property type="entry name" value="P-loop containing nucleoside triphosphate hydrolases"/>
    <property type="match status" value="1"/>
</dbReference>
<dbReference type="PROSITE" id="PS00152">
    <property type="entry name" value="ATPASE_ALPHA_BETA"/>
    <property type="match status" value="1"/>
</dbReference>
<comment type="function">
    <text evidence="1">Produces ATP from ADP in the presence of a proton gradient across the membrane. The catalytic sites are hosted primarily by the beta subunits.</text>
</comment>
<comment type="catalytic activity">
    <reaction evidence="1">
        <text>ATP + H2O + 4 H(+)(in) = ADP + phosphate + 5 H(+)(out)</text>
        <dbReference type="Rhea" id="RHEA:57720"/>
        <dbReference type="ChEBI" id="CHEBI:15377"/>
        <dbReference type="ChEBI" id="CHEBI:15378"/>
        <dbReference type="ChEBI" id="CHEBI:30616"/>
        <dbReference type="ChEBI" id="CHEBI:43474"/>
        <dbReference type="ChEBI" id="CHEBI:456216"/>
        <dbReference type="EC" id="7.1.2.2"/>
    </reaction>
</comment>
<comment type="subunit">
    <text evidence="1">F-type ATPases have 2 components, CF(1) - the catalytic core - and CF(0) - the membrane proton channel. CF(1) has five subunits: alpha(3), beta(3), gamma(1), delta(1), epsilon(1). CF(0) has three main subunits: a(1), b(2) and c(9-12). The alpha and beta chains form an alternating ring which encloses part of the gamma chain. CF(1) is attached to CF(0) by a central stalk formed by the gamma and epsilon chains, while a peripheral stalk is formed by the delta and b chains.</text>
</comment>
<comment type="subcellular location">
    <subcellularLocation>
        <location evidence="1">Cell membrane</location>
        <topology evidence="1">Peripheral membrane protein</topology>
    </subcellularLocation>
</comment>
<comment type="similarity">
    <text evidence="1">Belongs to the ATPase alpha/beta chains family.</text>
</comment>
<organism>
    <name type="scientific">Caldicellulosiruptor bescii (strain ATCC BAA-1888 / DSM 6725 / KCTC 15123 / Z-1320)</name>
    <name type="common">Anaerocellum thermophilum</name>
    <dbReference type="NCBI Taxonomy" id="521460"/>
    <lineage>
        <taxon>Bacteria</taxon>
        <taxon>Bacillati</taxon>
        <taxon>Bacillota</taxon>
        <taxon>Bacillota incertae sedis</taxon>
        <taxon>Caldicellulosiruptorales</taxon>
        <taxon>Caldicellulosiruptoraceae</taxon>
        <taxon>Caldicellulosiruptor</taxon>
    </lineage>
</organism>
<proteinExistence type="inferred from homology"/>
<evidence type="ECO:0000255" key="1">
    <source>
        <dbReference type="HAMAP-Rule" id="MF_01347"/>
    </source>
</evidence>
<keyword id="KW-0066">ATP synthesis</keyword>
<keyword id="KW-0067">ATP-binding</keyword>
<keyword id="KW-1003">Cell membrane</keyword>
<keyword id="KW-0139">CF(1)</keyword>
<keyword id="KW-0375">Hydrogen ion transport</keyword>
<keyword id="KW-0406">Ion transport</keyword>
<keyword id="KW-0472">Membrane</keyword>
<keyword id="KW-0547">Nucleotide-binding</keyword>
<keyword id="KW-1278">Translocase</keyword>
<keyword id="KW-0813">Transport</keyword>
<name>ATPB_CALBD</name>